<comment type="function">
    <text evidence="1">Helicase component of the SKI complex, a multiprotein complex that assists the RNA-degrading exosome during the mRNA decay and quality-control pathways. The SKI complex catalyzes mRNA extraction from 80S ribosomal complexes in the 3'-5' direction and channels mRNA to the cytosolic exosome for degradation. SKI-mediated extraction of mRNA from stalled ribosomes allow binding of the Pelota-HBS1L complex and subsequent ribosome disassembly by ABCE1 for ribosome recycling. In the nucleus, the SKI complex associates with transcriptionally active genes in a manner dependent on PAF1 complex (PAF1C).</text>
</comment>
<comment type="catalytic activity">
    <reaction evidence="1">
        <text>ATP + H2O = ADP + phosphate + H(+)</text>
        <dbReference type="Rhea" id="RHEA:13065"/>
        <dbReference type="ChEBI" id="CHEBI:15377"/>
        <dbReference type="ChEBI" id="CHEBI:15378"/>
        <dbReference type="ChEBI" id="CHEBI:30616"/>
        <dbReference type="ChEBI" id="CHEBI:43474"/>
        <dbReference type="ChEBI" id="CHEBI:456216"/>
        <dbReference type="EC" id="3.6.4.13"/>
    </reaction>
</comment>
<comment type="subunit">
    <text evidence="1">Component of the SKI complex which consists of SKIC2, SKIC3 and SKIC8. Interacts with HBS1L isoform 2.</text>
</comment>
<comment type="subcellular location">
    <subcellularLocation>
        <location evidence="1">Nucleus</location>
    </subcellularLocation>
    <subcellularLocation>
        <location evidence="1">Cytoplasm</location>
    </subcellularLocation>
</comment>
<comment type="similarity">
    <text evidence="5">Belongs to the helicase family. SKI2 subfamily.</text>
</comment>
<protein>
    <recommendedName>
        <fullName evidence="5">Superkiller complex protein 2</fullName>
        <shortName evidence="1">Ski2</shortName>
        <ecNumber evidence="1">3.6.4.13</ecNumber>
    </recommendedName>
</protein>
<feature type="chain" id="PRO_0000458136" description="Superkiller complex protein 2">
    <location>
        <begin position="1"/>
        <end position="1244"/>
    </location>
</feature>
<feature type="domain" description="Helicase ATP-binding" evidence="2">
    <location>
        <begin position="316"/>
        <end position="472"/>
    </location>
</feature>
<feature type="domain" description="Helicase C-terminal" evidence="3">
    <location>
        <begin position="582"/>
        <end position="752"/>
    </location>
</feature>
<feature type="region of interest" description="Disordered" evidence="4">
    <location>
        <begin position="218"/>
        <end position="249"/>
    </location>
</feature>
<feature type="short sequence motif" description="DEVH box" evidence="1">
    <location>
        <begin position="420"/>
        <end position="423"/>
    </location>
</feature>
<feature type="binding site" evidence="2">
    <location>
        <begin position="329"/>
        <end position="336"/>
    </location>
    <ligand>
        <name>ATP</name>
        <dbReference type="ChEBI" id="CHEBI:30616"/>
    </ligand>
</feature>
<feature type="modified residue" description="Phosphoserine" evidence="1">
    <location>
        <position position="242"/>
    </location>
</feature>
<feature type="modified residue" description="Phosphoserine" evidence="1">
    <location>
        <position position="253"/>
    </location>
</feature>
<feature type="sequence conflict" description="In Ref. 2; BAE35430." evidence="5" ref="2">
    <original>P</original>
    <variation>Q</variation>
    <location>
        <position position="948"/>
    </location>
</feature>
<evidence type="ECO:0000250" key="1">
    <source>
        <dbReference type="UniProtKB" id="Q15477"/>
    </source>
</evidence>
<evidence type="ECO:0000255" key="2">
    <source>
        <dbReference type="PROSITE-ProRule" id="PRU00541"/>
    </source>
</evidence>
<evidence type="ECO:0000255" key="3">
    <source>
        <dbReference type="PROSITE-ProRule" id="PRU00542"/>
    </source>
</evidence>
<evidence type="ECO:0000256" key="4">
    <source>
        <dbReference type="SAM" id="MobiDB-lite"/>
    </source>
</evidence>
<evidence type="ECO:0000305" key="5"/>
<evidence type="ECO:0000312" key="6">
    <source>
        <dbReference type="MGI" id="MGI:1099835"/>
    </source>
</evidence>
<sequence>MMETERLVLPPLDPLNLPLRALEVGCTGRWELLNVPGPPESTLPHGLPPCAPDLCQEAEQLFLSSPAWLPLHGVEHSARKWQRKTDPWSLLAAVETPVPSDLQAQRHPTTGHILGYKEVLLENTNLSATTSLSLRRPPGPASQSLWGNPTQYPFWPGGMDEPSITDLHTREEAEEEIDFEKDLLTVPPGFKKGVDFAPKDHPAPVPGLLSLSRLLEPLDLSGGDEDEGEAAGGPRGDNASPSPSGTPLVRASSLEDLVLKEAATVVSTPEPPKPPPQEQWAVPVDVTSPVGDFYRLIPQPAFQWAFEPDVFQKQAILHLEQHDSVFVAAHTSAGKTVVAEYAIALAQKHMTRTIYTSPIKALSNQKFRDFRNTFGDVGLLTGDVQLHPEASCLIMTTEILRSMLYSGSDVIRDLEWVIFDEVHYINDAERGVVWEEVLIMLPEHVSIILLSATVPNALEFADWIGRLKRRQIYVISTVARPVPLEHYLFTGNSPKTQGELFLLLDSRGAFHTQGYYAAVEAKKERMSKHAQTFGAKQPTHQGGPAQDRGVYLSLLASLRTRAQLPVVVFTFSRGRCDEQASGLTSLDLTTSSEKSEIHLFLQRCLARLRGSDRQLPQVLHMSELLRRGLGVHHSGILPILKEIVEMLFSRGLVKVLFATETFAMGVNMPARTVVFDSMRKHDGSTFRDLLPGEYVQMAGRAGRRGLDPTGTVILLCKGRVPEMADLHRMMMGKPSQLQSQFRLTYTMILNLLRVDALRVEDMMKRSFSEFPSRKDSKAHEQALADLTKRLGALEEPDVTGQLADLPEYYSWAEELTETQNMIQRRIMESVNGLKSLSVGRVVVVKNEEHHNALGVILQVSSNSTSRVFTTLVLCDKPVVSDNPRDKGPATPDVPHPDDLIGFKLFLPEGPCEHTVAKLQPGDVAAISTKVLRVNGEKISEDFSKRQQPKFRKDPPLAAVTTAVQELLRLAQSYPAGPPTLDPINDLQLKDVAVVEGGLRARKLEELIRGAQCVHSPRFPAQYVKLRERMQIQKEMERLRFLLSDQSLLLLPEYHQRVEVLRTLGYVDEAGTVKLAGRVACAMSSHELLLTELMFDNALSALRPEEIAALLSGLVCQSPGDPGDQLPSTLKQGVERVKAVAKRIGEVQVACGLNQTVEEFVGELNFGLVEVVYEWARGMPFSELAGLSGTPEGLVVRCIQRLAEMCRSLRGAARLVGEPVLGAKMETAATLLRRDIVFAASLYTQ</sequence>
<reference key="1">
    <citation type="journal article" date="2009" name="PLoS Biol.">
        <title>Lineage-specific biology revealed by a finished genome assembly of the mouse.</title>
        <authorList>
            <person name="Church D.M."/>
            <person name="Goodstadt L."/>
            <person name="Hillier L.W."/>
            <person name="Zody M.C."/>
            <person name="Goldstein S."/>
            <person name="She X."/>
            <person name="Bult C.J."/>
            <person name="Agarwala R."/>
            <person name="Cherry J.L."/>
            <person name="DiCuccio M."/>
            <person name="Hlavina W."/>
            <person name="Kapustin Y."/>
            <person name="Meric P."/>
            <person name="Maglott D."/>
            <person name="Birtle Z."/>
            <person name="Marques A.C."/>
            <person name="Graves T."/>
            <person name="Zhou S."/>
            <person name="Teague B."/>
            <person name="Potamousis K."/>
            <person name="Churas C."/>
            <person name="Place M."/>
            <person name="Herschleb J."/>
            <person name="Runnheim R."/>
            <person name="Forrest D."/>
            <person name="Amos-Landgraf J."/>
            <person name="Schwartz D.C."/>
            <person name="Cheng Z."/>
            <person name="Lindblad-Toh K."/>
            <person name="Eichler E.E."/>
            <person name="Ponting C.P."/>
        </authorList>
    </citation>
    <scope>NUCLEOTIDE SEQUENCE [LARGE SCALE GENOMIC DNA]</scope>
    <source>
        <strain>C57BL/6J</strain>
    </source>
</reference>
<reference key="2">
    <citation type="journal article" date="2005" name="Science">
        <title>The transcriptional landscape of the mammalian genome.</title>
        <authorList>
            <person name="Carninci P."/>
            <person name="Kasukawa T."/>
            <person name="Katayama S."/>
            <person name="Gough J."/>
            <person name="Frith M.C."/>
            <person name="Maeda N."/>
            <person name="Oyama R."/>
            <person name="Ravasi T."/>
            <person name="Lenhard B."/>
            <person name="Wells C."/>
            <person name="Kodzius R."/>
            <person name="Shimokawa K."/>
            <person name="Bajic V.B."/>
            <person name="Brenner S.E."/>
            <person name="Batalov S."/>
            <person name="Forrest A.R."/>
            <person name="Zavolan M."/>
            <person name="Davis M.J."/>
            <person name="Wilming L.G."/>
            <person name="Aidinis V."/>
            <person name="Allen J.E."/>
            <person name="Ambesi-Impiombato A."/>
            <person name="Apweiler R."/>
            <person name="Aturaliya R.N."/>
            <person name="Bailey T.L."/>
            <person name="Bansal M."/>
            <person name="Baxter L."/>
            <person name="Beisel K.W."/>
            <person name="Bersano T."/>
            <person name="Bono H."/>
            <person name="Chalk A.M."/>
            <person name="Chiu K.P."/>
            <person name="Choudhary V."/>
            <person name="Christoffels A."/>
            <person name="Clutterbuck D.R."/>
            <person name="Crowe M.L."/>
            <person name="Dalla E."/>
            <person name="Dalrymple B.P."/>
            <person name="de Bono B."/>
            <person name="Della Gatta G."/>
            <person name="di Bernardo D."/>
            <person name="Down T."/>
            <person name="Engstrom P."/>
            <person name="Fagiolini M."/>
            <person name="Faulkner G."/>
            <person name="Fletcher C.F."/>
            <person name="Fukushima T."/>
            <person name="Furuno M."/>
            <person name="Futaki S."/>
            <person name="Gariboldi M."/>
            <person name="Georgii-Hemming P."/>
            <person name="Gingeras T.R."/>
            <person name="Gojobori T."/>
            <person name="Green R.E."/>
            <person name="Gustincich S."/>
            <person name="Harbers M."/>
            <person name="Hayashi Y."/>
            <person name="Hensch T.K."/>
            <person name="Hirokawa N."/>
            <person name="Hill D."/>
            <person name="Huminiecki L."/>
            <person name="Iacono M."/>
            <person name="Ikeo K."/>
            <person name="Iwama A."/>
            <person name="Ishikawa T."/>
            <person name="Jakt M."/>
            <person name="Kanapin A."/>
            <person name="Katoh M."/>
            <person name="Kawasawa Y."/>
            <person name="Kelso J."/>
            <person name="Kitamura H."/>
            <person name="Kitano H."/>
            <person name="Kollias G."/>
            <person name="Krishnan S.P."/>
            <person name="Kruger A."/>
            <person name="Kummerfeld S.K."/>
            <person name="Kurochkin I.V."/>
            <person name="Lareau L.F."/>
            <person name="Lazarevic D."/>
            <person name="Lipovich L."/>
            <person name="Liu J."/>
            <person name="Liuni S."/>
            <person name="McWilliam S."/>
            <person name="Madan Babu M."/>
            <person name="Madera M."/>
            <person name="Marchionni L."/>
            <person name="Matsuda H."/>
            <person name="Matsuzawa S."/>
            <person name="Miki H."/>
            <person name="Mignone F."/>
            <person name="Miyake S."/>
            <person name="Morris K."/>
            <person name="Mottagui-Tabar S."/>
            <person name="Mulder N."/>
            <person name="Nakano N."/>
            <person name="Nakauchi H."/>
            <person name="Ng P."/>
            <person name="Nilsson R."/>
            <person name="Nishiguchi S."/>
            <person name="Nishikawa S."/>
            <person name="Nori F."/>
            <person name="Ohara O."/>
            <person name="Okazaki Y."/>
            <person name="Orlando V."/>
            <person name="Pang K.C."/>
            <person name="Pavan W.J."/>
            <person name="Pavesi G."/>
            <person name="Pesole G."/>
            <person name="Petrovsky N."/>
            <person name="Piazza S."/>
            <person name="Reed J."/>
            <person name="Reid J.F."/>
            <person name="Ring B.Z."/>
            <person name="Ringwald M."/>
            <person name="Rost B."/>
            <person name="Ruan Y."/>
            <person name="Salzberg S.L."/>
            <person name="Sandelin A."/>
            <person name="Schneider C."/>
            <person name="Schoenbach C."/>
            <person name="Sekiguchi K."/>
            <person name="Semple C.A."/>
            <person name="Seno S."/>
            <person name="Sessa L."/>
            <person name="Sheng Y."/>
            <person name="Shibata Y."/>
            <person name="Shimada H."/>
            <person name="Shimada K."/>
            <person name="Silva D."/>
            <person name="Sinclair B."/>
            <person name="Sperling S."/>
            <person name="Stupka E."/>
            <person name="Sugiura K."/>
            <person name="Sultana R."/>
            <person name="Takenaka Y."/>
            <person name="Taki K."/>
            <person name="Tammoja K."/>
            <person name="Tan S.L."/>
            <person name="Tang S."/>
            <person name="Taylor M.S."/>
            <person name="Tegner J."/>
            <person name="Teichmann S.A."/>
            <person name="Ueda H.R."/>
            <person name="van Nimwegen E."/>
            <person name="Verardo R."/>
            <person name="Wei C.L."/>
            <person name="Yagi K."/>
            <person name="Yamanishi H."/>
            <person name="Zabarovsky E."/>
            <person name="Zhu S."/>
            <person name="Zimmer A."/>
            <person name="Hide W."/>
            <person name="Bult C."/>
            <person name="Grimmond S.M."/>
            <person name="Teasdale R.D."/>
            <person name="Liu E.T."/>
            <person name="Brusic V."/>
            <person name="Quackenbush J."/>
            <person name="Wahlestedt C."/>
            <person name="Mattick J.S."/>
            <person name="Hume D.A."/>
            <person name="Kai C."/>
            <person name="Sasaki D."/>
            <person name="Tomaru Y."/>
            <person name="Fukuda S."/>
            <person name="Kanamori-Katayama M."/>
            <person name="Suzuki M."/>
            <person name="Aoki J."/>
            <person name="Arakawa T."/>
            <person name="Iida J."/>
            <person name="Imamura K."/>
            <person name="Itoh M."/>
            <person name="Kato T."/>
            <person name="Kawaji H."/>
            <person name="Kawagashira N."/>
            <person name="Kawashima T."/>
            <person name="Kojima M."/>
            <person name="Kondo S."/>
            <person name="Konno H."/>
            <person name="Nakano K."/>
            <person name="Ninomiya N."/>
            <person name="Nishio T."/>
            <person name="Okada M."/>
            <person name="Plessy C."/>
            <person name="Shibata K."/>
            <person name="Shiraki T."/>
            <person name="Suzuki S."/>
            <person name="Tagami M."/>
            <person name="Waki K."/>
            <person name="Watahiki A."/>
            <person name="Okamura-Oho Y."/>
            <person name="Suzuki H."/>
            <person name="Kawai J."/>
            <person name="Hayashizaki Y."/>
        </authorList>
    </citation>
    <scope>NUCLEOTIDE SEQUENCE [LARGE SCALE MRNA]</scope>
    <source>
        <strain>C57BL/6J</strain>
    </source>
</reference>
<reference key="3">
    <citation type="journal article" date="2004" name="Genome Res.">
        <title>The status, quality, and expansion of the NIH full-length cDNA project: the Mammalian Gene Collection (MGC).</title>
        <authorList>
            <consortium name="The MGC Project Team"/>
        </authorList>
    </citation>
    <scope>NUCLEOTIDE SEQUENCE [LARGE SCALE MRNA]</scope>
    <source>
        <strain>C57BL/6J</strain>
        <tissue>Brain</tissue>
    </source>
</reference>
<name>SKI2_MOUSE</name>
<gene>
    <name evidence="6" type="primary">Skic2</name>
</gene>
<proteinExistence type="evidence at transcript level"/>
<dbReference type="EC" id="3.6.4.13" evidence="1"/>
<dbReference type="EMBL" id="AK159854">
    <property type="protein sequence ID" value="BAE35430.1"/>
    <property type="molecule type" value="mRNA"/>
</dbReference>
<dbReference type="EMBL" id="BC065999">
    <property type="protein sequence ID" value="AAH65999.1"/>
    <property type="molecule type" value="mRNA"/>
</dbReference>
<dbReference type="CCDS" id="CCDS28661.1"/>
<dbReference type="RefSeq" id="NP_067312.2">
    <property type="nucleotide sequence ID" value="NM_021337.2"/>
</dbReference>
<dbReference type="SMR" id="Q6NZR5"/>
<dbReference type="FunCoup" id="Q6NZR5">
    <property type="interactions" value="1664"/>
</dbReference>
<dbReference type="STRING" id="10090.ENSMUSP00000036265"/>
<dbReference type="iPTMnet" id="Q6NZR5"/>
<dbReference type="PhosphoSitePlus" id="Q6NZR5"/>
<dbReference type="jPOST" id="Q6NZR5"/>
<dbReference type="PaxDb" id="10090-ENSMUSP00000036265"/>
<dbReference type="ProteomicsDB" id="333283"/>
<dbReference type="Antibodypedia" id="28089">
    <property type="antibodies" value="95 antibodies from 23 providers"/>
</dbReference>
<dbReference type="DNASU" id="108077"/>
<dbReference type="Ensembl" id="ENSMUST00000046022.16">
    <property type="protein sequence ID" value="ENSMUSP00000036265.10"/>
    <property type="gene ID" value="ENSMUSG00000040356.17"/>
</dbReference>
<dbReference type="GeneID" id="108077"/>
<dbReference type="KEGG" id="mmu:108077"/>
<dbReference type="UCSC" id="uc008cds.1">
    <property type="organism name" value="mouse"/>
</dbReference>
<dbReference type="AGR" id="MGI:1099835"/>
<dbReference type="CTD" id="6499"/>
<dbReference type="MGI" id="MGI:1099835">
    <property type="gene designation" value="Skic2"/>
</dbReference>
<dbReference type="VEuPathDB" id="HostDB:ENSMUSG00000040356"/>
<dbReference type="eggNOG" id="KOG0947">
    <property type="taxonomic scope" value="Eukaryota"/>
</dbReference>
<dbReference type="GeneTree" id="ENSGT00940000158255"/>
<dbReference type="HOGENOM" id="CLU_002902_1_4_1"/>
<dbReference type="InParanoid" id="Q6NZR5"/>
<dbReference type="OMA" id="DHVNIIM"/>
<dbReference type="OrthoDB" id="52354at9989"/>
<dbReference type="TreeFam" id="TF314438"/>
<dbReference type="Reactome" id="R-MMU-429958">
    <property type="pathway name" value="mRNA decay by 3' to 5' exoribonuclease"/>
</dbReference>
<dbReference type="BioGRID-ORCS" id="108077">
    <property type="hits" value="16 hits in 79 CRISPR screens"/>
</dbReference>
<dbReference type="ChiTaRS" id="Skiv2l">
    <property type="organism name" value="mouse"/>
</dbReference>
<dbReference type="PRO" id="PR:Q6NZR5"/>
<dbReference type="Proteomes" id="UP000000589">
    <property type="component" value="Chromosome 17"/>
</dbReference>
<dbReference type="RNAct" id="Q6NZR5">
    <property type="molecule type" value="protein"/>
</dbReference>
<dbReference type="Bgee" id="ENSMUSG00000040356">
    <property type="expression patterns" value="Expressed in spermatocyte and 160 other cell types or tissues"/>
</dbReference>
<dbReference type="ExpressionAtlas" id="Q6NZR5">
    <property type="expression patterns" value="baseline and differential"/>
</dbReference>
<dbReference type="GO" id="GO:0005634">
    <property type="term" value="C:nucleus"/>
    <property type="evidence" value="ECO:0007669"/>
    <property type="project" value="UniProtKB-SubCell"/>
</dbReference>
<dbReference type="GO" id="GO:0055087">
    <property type="term" value="C:Ski complex"/>
    <property type="evidence" value="ECO:0000250"/>
    <property type="project" value="UniProtKB"/>
</dbReference>
<dbReference type="GO" id="GO:0034458">
    <property type="term" value="F:3'-5' RNA helicase activity"/>
    <property type="evidence" value="ECO:0000250"/>
    <property type="project" value="UniProtKB"/>
</dbReference>
<dbReference type="GO" id="GO:0005524">
    <property type="term" value="F:ATP binding"/>
    <property type="evidence" value="ECO:0007669"/>
    <property type="project" value="UniProtKB-KW"/>
</dbReference>
<dbReference type="GO" id="GO:0016787">
    <property type="term" value="F:hydrolase activity"/>
    <property type="evidence" value="ECO:0007669"/>
    <property type="project" value="UniProtKB-KW"/>
</dbReference>
<dbReference type="GO" id="GO:0003723">
    <property type="term" value="F:RNA binding"/>
    <property type="evidence" value="ECO:0007669"/>
    <property type="project" value="UniProtKB-KW"/>
</dbReference>
<dbReference type="GO" id="GO:0070478">
    <property type="term" value="P:nuclear-transcribed mRNA catabolic process, 3'-5' exonucleolytic nonsense-mediated decay"/>
    <property type="evidence" value="ECO:0000250"/>
    <property type="project" value="UniProtKB"/>
</dbReference>
<dbReference type="GO" id="GO:0072344">
    <property type="term" value="P:rescue of stalled ribosome"/>
    <property type="evidence" value="ECO:0000250"/>
    <property type="project" value="UniProtKB"/>
</dbReference>
<dbReference type="CDD" id="cd18027">
    <property type="entry name" value="DEXHc_SKIV2L"/>
    <property type="match status" value="1"/>
</dbReference>
<dbReference type="CDD" id="cd18795">
    <property type="entry name" value="SF2_C_Ski2"/>
    <property type="match status" value="1"/>
</dbReference>
<dbReference type="FunFam" id="3.40.50.300:FF:000354">
    <property type="entry name" value="ATP-dependent RNA helicase SKI2"/>
    <property type="match status" value="1"/>
</dbReference>
<dbReference type="FunFam" id="3.40.50.300:FF:000447">
    <property type="entry name" value="helicase SKI2W isoform X2"/>
    <property type="match status" value="1"/>
</dbReference>
<dbReference type="FunFam" id="1.10.3380.30:FF:000001">
    <property type="entry name" value="Ski2 ATP-dependent RNA helicase"/>
    <property type="match status" value="1"/>
</dbReference>
<dbReference type="FunFam" id="1.10.3380.30:FF:000005">
    <property type="entry name" value="Ski2 like RNA helicase"/>
    <property type="match status" value="1"/>
</dbReference>
<dbReference type="Gene3D" id="1.10.3380.30">
    <property type="match status" value="2"/>
</dbReference>
<dbReference type="Gene3D" id="3.40.50.300">
    <property type="entry name" value="P-loop containing nucleotide triphosphate hydrolases"/>
    <property type="match status" value="2"/>
</dbReference>
<dbReference type="InterPro" id="IPR011545">
    <property type="entry name" value="DEAD/DEAH_box_helicase_dom"/>
</dbReference>
<dbReference type="InterPro" id="IPR014001">
    <property type="entry name" value="Helicase_ATP-bd"/>
</dbReference>
<dbReference type="InterPro" id="IPR001650">
    <property type="entry name" value="Helicase_C-like"/>
</dbReference>
<dbReference type="InterPro" id="IPR048392">
    <property type="entry name" value="MTR4-like_stalk"/>
</dbReference>
<dbReference type="InterPro" id="IPR025696">
    <property type="entry name" value="MTR4_beta-barrel"/>
</dbReference>
<dbReference type="InterPro" id="IPR027417">
    <property type="entry name" value="P-loop_NTPase"/>
</dbReference>
<dbReference type="InterPro" id="IPR050699">
    <property type="entry name" value="RNA-DNA_Helicase"/>
</dbReference>
<dbReference type="InterPro" id="IPR016438">
    <property type="entry name" value="SKI2-like"/>
</dbReference>
<dbReference type="InterPro" id="IPR012961">
    <property type="entry name" value="Ski2/MTR4_C"/>
</dbReference>
<dbReference type="InterPro" id="IPR040801">
    <property type="entry name" value="Ski2_N"/>
</dbReference>
<dbReference type="PANTHER" id="PTHR12131">
    <property type="entry name" value="ATP-DEPENDENT RNA AND DNA HELICASE"/>
    <property type="match status" value="1"/>
</dbReference>
<dbReference type="PANTHER" id="PTHR12131:SF1">
    <property type="entry name" value="ATP-DEPENDENT RNA HELICASE SUPV3L1, MITOCHONDRIAL-RELATED"/>
    <property type="match status" value="1"/>
</dbReference>
<dbReference type="Pfam" id="PF00270">
    <property type="entry name" value="DEAD"/>
    <property type="match status" value="1"/>
</dbReference>
<dbReference type="Pfam" id="PF08148">
    <property type="entry name" value="DSHCT"/>
    <property type="match status" value="1"/>
</dbReference>
<dbReference type="Pfam" id="PF00271">
    <property type="entry name" value="Helicase_C"/>
    <property type="match status" value="1"/>
</dbReference>
<dbReference type="Pfam" id="PF21408">
    <property type="entry name" value="MTR4-like_stalk"/>
    <property type="match status" value="1"/>
</dbReference>
<dbReference type="Pfam" id="PF13234">
    <property type="entry name" value="MTR4_beta-barrel"/>
    <property type="match status" value="1"/>
</dbReference>
<dbReference type="Pfam" id="PF17911">
    <property type="entry name" value="Ski2_N"/>
    <property type="match status" value="1"/>
</dbReference>
<dbReference type="PIRSF" id="PIRSF005198">
    <property type="entry name" value="Antiviral_helicase_SKI2"/>
    <property type="match status" value="1"/>
</dbReference>
<dbReference type="SMART" id="SM00487">
    <property type="entry name" value="DEXDc"/>
    <property type="match status" value="1"/>
</dbReference>
<dbReference type="SMART" id="SM01142">
    <property type="entry name" value="DSHCT"/>
    <property type="match status" value="1"/>
</dbReference>
<dbReference type="SMART" id="SM00490">
    <property type="entry name" value="HELICc"/>
    <property type="match status" value="1"/>
</dbReference>
<dbReference type="SUPFAM" id="SSF52540">
    <property type="entry name" value="P-loop containing nucleoside triphosphate hydrolases"/>
    <property type="match status" value="1"/>
</dbReference>
<dbReference type="PROSITE" id="PS51192">
    <property type="entry name" value="HELICASE_ATP_BIND_1"/>
    <property type="match status" value="1"/>
</dbReference>
<dbReference type="PROSITE" id="PS51194">
    <property type="entry name" value="HELICASE_CTER"/>
    <property type="match status" value="1"/>
</dbReference>
<accession>Q6NZR5</accession>
<accession>Q3TW36</accession>
<keyword id="KW-0067">ATP-binding</keyword>
<keyword id="KW-0963">Cytoplasm</keyword>
<keyword id="KW-0347">Helicase</keyword>
<keyword id="KW-0378">Hydrolase</keyword>
<keyword id="KW-0547">Nucleotide-binding</keyword>
<keyword id="KW-0539">Nucleus</keyword>
<keyword id="KW-0597">Phosphoprotein</keyword>
<keyword id="KW-1185">Reference proteome</keyword>
<keyword id="KW-0694">RNA-binding</keyword>
<organism>
    <name type="scientific">Mus musculus</name>
    <name type="common">Mouse</name>
    <dbReference type="NCBI Taxonomy" id="10090"/>
    <lineage>
        <taxon>Eukaryota</taxon>
        <taxon>Metazoa</taxon>
        <taxon>Chordata</taxon>
        <taxon>Craniata</taxon>
        <taxon>Vertebrata</taxon>
        <taxon>Euteleostomi</taxon>
        <taxon>Mammalia</taxon>
        <taxon>Eutheria</taxon>
        <taxon>Euarchontoglires</taxon>
        <taxon>Glires</taxon>
        <taxon>Rodentia</taxon>
        <taxon>Myomorpha</taxon>
        <taxon>Muroidea</taxon>
        <taxon>Muridae</taxon>
        <taxon>Murinae</taxon>
        <taxon>Mus</taxon>
        <taxon>Mus</taxon>
    </lineage>
</organism>